<reference key="1">
    <citation type="journal article" date="2009" name="Environ. Microbiol.">
        <title>Contribution of mobile genetic elements to Desulfovibrio vulgaris genome plasticity.</title>
        <authorList>
            <person name="Walker C.B."/>
            <person name="Stolyar S."/>
            <person name="Chivian D."/>
            <person name="Pinel N."/>
            <person name="Gabster J.A."/>
            <person name="Dehal P.S."/>
            <person name="He Z."/>
            <person name="Yang Z.K."/>
            <person name="Yen H.C."/>
            <person name="Zhou J."/>
            <person name="Wall J.D."/>
            <person name="Hazen T.C."/>
            <person name="Arkin A.P."/>
            <person name="Stahl D.A."/>
        </authorList>
    </citation>
    <scope>NUCLEOTIDE SEQUENCE [LARGE SCALE GENOMIC DNA]</scope>
    <source>
        <strain>DP4</strain>
    </source>
</reference>
<keyword id="KW-0028">Amino-acid biosynthesis</keyword>
<keyword id="KW-0057">Aromatic amino acid biosynthesis</keyword>
<keyword id="KW-0456">Lyase</keyword>
<keyword id="KW-0822">Tryptophan biosynthesis</keyword>
<gene>
    <name evidence="1" type="primary">trpA</name>
    <name type="ordered locus">Dvul_2466</name>
</gene>
<comment type="function">
    <text evidence="1">The alpha subunit is responsible for the aldol cleavage of indoleglycerol phosphate to indole and glyceraldehyde 3-phosphate.</text>
</comment>
<comment type="catalytic activity">
    <reaction evidence="1">
        <text>(1S,2R)-1-C-(indol-3-yl)glycerol 3-phosphate + L-serine = D-glyceraldehyde 3-phosphate + L-tryptophan + H2O</text>
        <dbReference type="Rhea" id="RHEA:10532"/>
        <dbReference type="ChEBI" id="CHEBI:15377"/>
        <dbReference type="ChEBI" id="CHEBI:33384"/>
        <dbReference type="ChEBI" id="CHEBI:57912"/>
        <dbReference type="ChEBI" id="CHEBI:58866"/>
        <dbReference type="ChEBI" id="CHEBI:59776"/>
        <dbReference type="EC" id="4.2.1.20"/>
    </reaction>
</comment>
<comment type="pathway">
    <text evidence="1">Amino-acid biosynthesis; L-tryptophan biosynthesis; L-tryptophan from chorismate: step 5/5.</text>
</comment>
<comment type="subunit">
    <text evidence="1">Tetramer of two alpha and two beta chains.</text>
</comment>
<comment type="similarity">
    <text evidence="1">Belongs to the TrpA family.</text>
</comment>
<sequence>MSASRLERRIREAQAAGRPALIPFLTAGFPTPERFWDELEALDAAGADIIEVGVPFSDPVADGPVVAAASQRALESGVTLRWIMDGLAARKARLRAGLVLMGYLNPFMQYGFERFVTDAADAGVAGCIIPDLPLDEDADLRALLAARGMDLIALVGPNTGEGRMREYAAVASGYVYVVSVMGTTGVRDGLPVEVADTLARARQCFSIPVALGFGISRPAQLEGLSHPPDAVIFGSALLRHLDAGGDAASFMKAWAER</sequence>
<protein>
    <recommendedName>
        <fullName evidence="1">Tryptophan synthase alpha chain</fullName>
        <ecNumber evidence="1">4.2.1.20</ecNumber>
    </recommendedName>
</protein>
<dbReference type="EC" id="4.2.1.20" evidence="1"/>
<dbReference type="EMBL" id="CP000527">
    <property type="protein sequence ID" value="ABM29482.1"/>
    <property type="molecule type" value="Genomic_DNA"/>
</dbReference>
<dbReference type="RefSeq" id="WP_011792870.1">
    <property type="nucleotide sequence ID" value="NC_008751.1"/>
</dbReference>
<dbReference type="SMR" id="A1VGB6"/>
<dbReference type="KEGG" id="dvl:Dvul_2466"/>
<dbReference type="HOGENOM" id="CLU_016734_0_0_7"/>
<dbReference type="UniPathway" id="UPA00035">
    <property type="reaction ID" value="UER00044"/>
</dbReference>
<dbReference type="Proteomes" id="UP000009173">
    <property type="component" value="Chromosome"/>
</dbReference>
<dbReference type="GO" id="GO:0005829">
    <property type="term" value="C:cytosol"/>
    <property type="evidence" value="ECO:0007669"/>
    <property type="project" value="TreeGrafter"/>
</dbReference>
<dbReference type="GO" id="GO:0004834">
    <property type="term" value="F:tryptophan synthase activity"/>
    <property type="evidence" value="ECO:0007669"/>
    <property type="project" value="UniProtKB-UniRule"/>
</dbReference>
<dbReference type="CDD" id="cd04724">
    <property type="entry name" value="Tryptophan_synthase_alpha"/>
    <property type="match status" value="1"/>
</dbReference>
<dbReference type="FunFam" id="3.20.20.70:FF:000037">
    <property type="entry name" value="Tryptophan synthase alpha chain"/>
    <property type="match status" value="1"/>
</dbReference>
<dbReference type="Gene3D" id="3.20.20.70">
    <property type="entry name" value="Aldolase class I"/>
    <property type="match status" value="1"/>
</dbReference>
<dbReference type="HAMAP" id="MF_00131">
    <property type="entry name" value="Trp_synth_alpha"/>
    <property type="match status" value="1"/>
</dbReference>
<dbReference type="InterPro" id="IPR013785">
    <property type="entry name" value="Aldolase_TIM"/>
</dbReference>
<dbReference type="InterPro" id="IPR011060">
    <property type="entry name" value="RibuloseP-bd_barrel"/>
</dbReference>
<dbReference type="InterPro" id="IPR018204">
    <property type="entry name" value="Trp_synthase_alpha_AS"/>
</dbReference>
<dbReference type="InterPro" id="IPR002028">
    <property type="entry name" value="Trp_synthase_suA"/>
</dbReference>
<dbReference type="NCBIfam" id="TIGR00262">
    <property type="entry name" value="trpA"/>
    <property type="match status" value="1"/>
</dbReference>
<dbReference type="PANTHER" id="PTHR43406:SF1">
    <property type="entry name" value="TRYPTOPHAN SYNTHASE ALPHA CHAIN, CHLOROPLASTIC"/>
    <property type="match status" value="1"/>
</dbReference>
<dbReference type="PANTHER" id="PTHR43406">
    <property type="entry name" value="TRYPTOPHAN SYNTHASE, ALPHA CHAIN"/>
    <property type="match status" value="1"/>
</dbReference>
<dbReference type="Pfam" id="PF00290">
    <property type="entry name" value="Trp_syntA"/>
    <property type="match status" value="1"/>
</dbReference>
<dbReference type="SUPFAM" id="SSF51366">
    <property type="entry name" value="Ribulose-phoshate binding barrel"/>
    <property type="match status" value="1"/>
</dbReference>
<dbReference type="PROSITE" id="PS00167">
    <property type="entry name" value="TRP_SYNTHASE_ALPHA"/>
    <property type="match status" value="1"/>
</dbReference>
<name>TRPA_NITV4</name>
<organism>
    <name type="scientific">Nitratidesulfovibrio vulgaris (strain DP4)</name>
    <name type="common">Desulfovibrio vulgaris</name>
    <dbReference type="NCBI Taxonomy" id="391774"/>
    <lineage>
        <taxon>Bacteria</taxon>
        <taxon>Pseudomonadati</taxon>
        <taxon>Thermodesulfobacteriota</taxon>
        <taxon>Desulfovibrionia</taxon>
        <taxon>Desulfovibrionales</taxon>
        <taxon>Desulfovibrionaceae</taxon>
        <taxon>Nitratidesulfovibrio</taxon>
    </lineage>
</organism>
<feature type="chain" id="PRO_1000018195" description="Tryptophan synthase alpha chain">
    <location>
        <begin position="1"/>
        <end position="257"/>
    </location>
</feature>
<feature type="active site" description="Proton acceptor" evidence="1">
    <location>
        <position position="51"/>
    </location>
</feature>
<feature type="active site" description="Proton acceptor" evidence="1">
    <location>
        <position position="62"/>
    </location>
</feature>
<evidence type="ECO:0000255" key="1">
    <source>
        <dbReference type="HAMAP-Rule" id="MF_00131"/>
    </source>
</evidence>
<accession>A1VGB6</accession>
<proteinExistence type="inferred from homology"/>